<keyword id="KW-0975">Bacterial flagellum</keyword>
<keyword id="KW-0998">Cell outer membrane</keyword>
<keyword id="KW-0449">Lipoprotein</keyword>
<keyword id="KW-0472">Membrane</keyword>
<keyword id="KW-0564">Palmitate</keyword>
<keyword id="KW-0732">Signal</keyword>
<name>FLGH_SHESM</name>
<organism>
    <name type="scientific">Shewanella sp. (strain MR-4)</name>
    <dbReference type="NCBI Taxonomy" id="60480"/>
    <lineage>
        <taxon>Bacteria</taxon>
        <taxon>Pseudomonadati</taxon>
        <taxon>Pseudomonadota</taxon>
        <taxon>Gammaproteobacteria</taxon>
        <taxon>Alteromonadales</taxon>
        <taxon>Shewanellaceae</taxon>
        <taxon>Shewanella</taxon>
    </lineage>
</organism>
<feature type="signal peptide" evidence="1">
    <location>
        <begin position="1"/>
        <end position="15"/>
    </location>
</feature>
<feature type="chain" id="PRO_1000050101" description="Flagellar L-ring protein">
    <location>
        <begin position="16"/>
        <end position="224"/>
    </location>
</feature>
<feature type="lipid moiety-binding region" description="N-palmitoyl cysteine" evidence="1">
    <location>
        <position position="16"/>
    </location>
</feature>
<feature type="lipid moiety-binding region" description="S-diacylglycerol cysteine" evidence="1">
    <location>
        <position position="16"/>
    </location>
</feature>
<proteinExistence type="inferred from homology"/>
<reference key="1">
    <citation type="submission" date="2006-08" db="EMBL/GenBank/DDBJ databases">
        <title>Complete sequence of Shewanella sp. MR-4.</title>
        <authorList>
            <consortium name="US DOE Joint Genome Institute"/>
            <person name="Copeland A."/>
            <person name="Lucas S."/>
            <person name="Lapidus A."/>
            <person name="Barry K."/>
            <person name="Detter J.C."/>
            <person name="Glavina del Rio T."/>
            <person name="Hammon N."/>
            <person name="Israni S."/>
            <person name="Dalin E."/>
            <person name="Tice H."/>
            <person name="Pitluck S."/>
            <person name="Kiss H."/>
            <person name="Brettin T."/>
            <person name="Bruce D."/>
            <person name="Han C."/>
            <person name="Tapia R."/>
            <person name="Gilna P."/>
            <person name="Schmutz J."/>
            <person name="Larimer F."/>
            <person name="Land M."/>
            <person name="Hauser L."/>
            <person name="Kyrpides N."/>
            <person name="Mikhailova N."/>
            <person name="Nealson K."/>
            <person name="Konstantinidis K."/>
            <person name="Klappenbach J."/>
            <person name="Tiedje J."/>
            <person name="Richardson P."/>
        </authorList>
    </citation>
    <scope>NUCLEOTIDE SEQUENCE [LARGE SCALE GENOMIC DNA]</scope>
    <source>
        <strain>MR-4</strain>
    </source>
</reference>
<dbReference type="EMBL" id="CP000446">
    <property type="protein sequence ID" value="ABI38345.1"/>
    <property type="molecule type" value="Genomic_DNA"/>
</dbReference>
<dbReference type="RefSeq" id="WP_011622053.1">
    <property type="nucleotide sequence ID" value="NC_008321.1"/>
</dbReference>
<dbReference type="SMR" id="Q0HKS2"/>
<dbReference type="KEGG" id="she:Shewmr4_1265"/>
<dbReference type="HOGENOM" id="CLU_069313_0_2_6"/>
<dbReference type="GO" id="GO:0009427">
    <property type="term" value="C:bacterial-type flagellum basal body, distal rod, L ring"/>
    <property type="evidence" value="ECO:0007669"/>
    <property type="project" value="InterPro"/>
</dbReference>
<dbReference type="GO" id="GO:0009279">
    <property type="term" value="C:cell outer membrane"/>
    <property type="evidence" value="ECO:0007669"/>
    <property type="project" value="UniProtKB-SubCell"/>
</dbReference>
<dbReference type="GO" id="GO:0003774">
    <property type="term" value="F:cytoskeletal motor activity"/>
    <property type="evidence" value="ECO:0007669"/>
    <property type="project" value="InterPro"/>
</dbReference>
<dbReference type="GO" id="GO:0071973">
    <property type="term" value="P:bacterial-type flagellum-dependent cell motility"/>
    <property type="evidence" value="ECO:0007669"/>
    <property type="project" value="InterPro"/>
</dbReference>
<dbReference type="HAMAP" id="MF_00415">
    <property type="entry name" value="FlgH"/>
    <property type="match status" value="1"/>
</dbReference>
<dbReference type="InterPro" id="IPR000527">
    <property type="entry name" value="Flag_Lring"/>
</dbReference>
<dbReference type="NCBIfam" id="NF001304">
    <property type="entry name" value="PRK00249.1-4"/>
    <property type="match status" value="1"/>
</dbReference>
<dbReference type="NCBIfam" id="NF009338">
    <property type="entry name" value="PRK12698.1"/>
    <property type="match status" value="1"/>
</dbReference>
<dbReference type="PANTHER" id="PTHR34933">
    <property type="entry name" value="FLAGELLAR L-RING PROTEIN"/>
    <property type="match status" value="1"/>
</dbReference>
<dbReference type="PANTHER" id="PTHR34933:SF1">
    <property type="entry name" value="FLAGELLAR L-RING PROTEIN"/>
    <property type="match status" value="1"/>
</dbReference>
<dbReference type="Pfam" id="PF02107">
    <property type="entry name" value="FlgH"/>
    <property type="match status" value="1"/>
</dbReference>
<dbReference type="PRINTS" id="PR01008">
    <property type="entry name" value="FLGLRINGFLGH"/>
</dbReference>
<dbReference type="PROSITE" id="PS51257">
    <property type="entry name" value="PROKAR_LIPOPROTEIN"/>
    <property type="match status" value="1"/>
</dbReference>
<accession>Q0HKS2</accession>
<evidence type="ECO:0000255" key="1">
    <source>
        <dbReference type="HAMAP-Rule" id="MF_00415"/>
    </source>
</evidence>
<comment type="function">
    <text evidence="1">Assembles around the rod to form the L-ring and probably protects the motor/basal body from shearing forces during rotation.</text>
</comment>
<comment type="subunit">
    <text evidence="1">The basal body constitutes a major portion of the flagellar organelle and consists of four rings (L,P,S, and M) mounted on a central rod.</text>
</comment>
<comment type="subcellular location">
    <subcellularLocation>
        <location evidence="1">Cell outer membrane</location>
        <topology evidence="1">Lipid-anchor</topology>
    </subcellularLocation>
    <subcellularLocation>
        <location evidence="1">Bacterial flagellum basal body</location>
    </subcellularLocation>
</comment>
<comment type="similarity">
    <text evidence="1">Belongs to the FlgH family.</text>
</comment>
<protein>
    <recommendedName>
        <fullName evidence="1">Flagellar L-ring protein</fullName>
    </recommendedName>
    <alternativeName>
        <fullName evidence="1">Basal body L-ring protein</fullName>
    </alternativeName>
</protein>
<sequence>MARYFILAAALLLTACSSTSKKPIADDPFYAPVYPEAPPTKIAATGSIYQDSQAASLYSDIRAHKVGDIITIVLKEATQAKKSAGNQIKKGSDLSLDPIYAGGSNVSIGGVPLDLRYKDSMNTKRESDADQSNSLDGSISANVMQVLNNGNLVVRGEKWISINNGDEFIRVTGIVRSQDIKPDNTIDSTRMANARIQYSGTGTFADAQKVGWLSQFFMSDWWPF</sequence>
<gene>
    <name evidence="1" type="primary">flgH</name>
    <name type="ordered locus">Shewmr4_1265</name>
</gene>